<reference key="1">
    <citation type="journal article" date="2005" name="Science">
        <title>The transcriptional landscape of the mammalian genome.</title>
        <authorList>
            <person name="Carninci P."/>
            <person name="Kasukawa T."/>
            <person name="Katayama S."/>
            <person name="Gough J."/>
            <person name="Frith M.C."/>
            <person name="Maeda N."/>
            <person name="Oyama R."/>
            <person name="Ravasi T."/>
            <person name="Lenhard B."/>
            <person name="Wells C."/>
            <person name="Kodzius R."/>
            <person name="Shimokawa K."/>
            <person name="Bajic V.B."/>
            <person name="Brenner S.E."/>
            <person name="Batalov S."/>
            <person name="Forrest A.R."/>
            <person name="Zavolan M."/>
            <person name="Davis M.J."/>
            <person name="Wilming L.G."/>
            <person name="Aidinis V."/>
            <person name="Allen J.E."/>
            <person name="Ambesi-Impiombato A."/>
            <person name="Apweiler R."/>
            <person name="Aturaliya R.N."/>
            <person name="Bailey T.L."/>
            <person name="Bansal M."/>
            <person name="Baxter L."/>
            <person name="Beisel K.W."/>
            <person name="Bersano T."/>
            <person name="Bono H."/>
            <person name="Chalk A.M."/>
            <person name="Chiu K.P."/>
            <person name="Choudhary V."/>
            <person name="Christoffels A."/>
            <person name="Clutterbuck D.R."/>
            <person name="Crowe M.L."/>
            <person name="Dalla E."/>
            <person name="Dalrymple B.P."/>
            <person name="de Bono B."/>
            <person name="Della Gatta G."/>
            <person name="di Bernardo D."/>
            <person name="Down T."/>
            <person name="Engstrom P."/>
            <person name="Fagiolini M."/>
            <person name="Faulkner G."/>
            <person name="Fletcher C.F."/>
            <person name="Fukushima T."/>
            <person name="Furuno M."/>
            <person name="Futaki S."/>
            <person name="Gariboldi M."/>
            <person name="Georgii-Hemming P."/>
            <person name="Gingeras T.R."/>
            <person name="Gojobori T."/>
            <person name="Green R.E."/>
            <person name="Gustincich S."/>
            <person name="Harbers M."/>
            <person name="Hayashi Y."/>
            <person name="Hensch T.K."/>
            <person name="Hirokawa N."/>
            <person name="Hill D."/>
            <person name="Huminiecki L."/>
            <person name="Iacono M."/>
            <person name="Ikeo K."/>
            <person name="Iwama A."/>
            <person name="Ishikawa T."/>
            <person name="Jakt M."/>
            <person name="Kanapin A."/>
            <person name="Katoh M."/>
            <person name="Kawasawa Y."/>
            <person name="Kelso J."/>
            <person name="Kitamura H."/>
            <person name="Kitano H."/>
            <person name="Kollias G."/>
            <person name="Krishnan S.P."/>
            <person name="Kruger A."/>
            <person name="Kummerfeld S.K."/>
            <person name="Kurochkin I.V."/>
            <person name="Lareau L.F."/>
            <person name="Lazarevic D."/>
            <person name="Lipovich L."/>
            <person name="Liu J."/>
            <person name="Liuni S."/>
            <person name="McWilliam S."/>
            <person name="Madan Babu M."/>
            <person name="Madera M."/>
            <person name="Marchionni L."/>
            <person name="Matsuda H."/>
            <person name="Matsuzawa S."/>
            <person name="Miki H."/>
            <person name="Mignone F."/>
            <person name="Miyake S."/>
            <person name="Morris K."/>
            <person name="Mottagui-Tabar S."/>
            <person name="Mulder N."/>
            <person name="Nakano N."/>
            <person name="Nakauchi H."/>
            <person name="Ng P."/>
            <person name="Nilsson R."/>
            <person name="Nishiguchi S."/>
            <person name="Nishikawa S."/>
            <person name="Nori F."/>
            <person name="Ohara O."/>
            <person name="Okazaki Y."/>
            <person name="Orlando V."/>
            <person name="Pang K.C."/>
            <person name="Pavan W.J."/>
            <person name="Pavesi G."/>
            <person name="Pesole G."/>
            <person name="Petrovsky N."/>
            <person name="Piazza S."/>
            <person name="Reed J."/>
            <person name="Reid J.F."/>
            <person name="Ring B.Z."/>
            <person name="Ringwald M."/>
            <person name="Rost B."/>
            <person name="Ruan Y."/>
            <person name="Salzberg S.L."/>
            <person name="Sandelin A."/>
            <person name="Schneider C."/>
            <person name="Schoenbach C."/>
            <person name="Sekiguchi K."/>
            <person name="Semple C.A."/>
            <person name="Seno S."/>
            <person name="Sessa L."/>
            <person name="Sheng Y."/>
            <person name="Shibata Y."/>
            <person name="Shimada H."/>
            <person name="Shimada K."/>
            <person name="Silva D."/>
            <person name="Sinclair B."/>
            <person name="Sperling S."/>
            <person name="Stupka E."/>
            <person name="Sugiura K."/>
            <person name="Sultana R."/>
            <person name="Takenaka Y."/>
            <person name="Taki K."/>
            <person name="Tammoja K."/>
            <person name="Tan S.L."/>
            <person name="Tang S."/>
            <person name="Taylor M.S."/>
            <person name="Tegner J."/>
            <person name="Teichmann S.A."/>
            <person name="Ueda H.R."/>
            <person name="van Nimwegen E."/>
            <person name="Verardo R."/>
            <person name="Wei C.L."/>
            <person name="Yagi K."/>
            <person name="Yamanishi H."/>
            <person name="Zabarovsky E."/>
            <person name="Zhu S."/>
            <person name="Zimmer A."/>
            <person name="Hide W."/>
            <person name="Bult C."/>
            <person name="Grimmond S.M."/>
            <person name="Teasdale R.D."/>
            <person name="Liu E.T."/>
            <person name="Brusic V."/>
            <person name="Quackenbush J."/>
            <person name="Wahlestedt C."/>
            <person name="Mattick J.S."/>
            <person name="Hume D.A."/>
            <person name="Kai C."/>
            <person name="Sasaki D."/>
            <person name="Tomaru Y."/>
            <person name="Fukuda S."/>
            <person name="Kanamori-Katayama M."/>
            <person name="Suzuki M."/>
            <person name="Aoki J."/>
            <person name="Arakawa T."/>
            <person name="Iida J."/>
            <person name="Imamura K."/>
            <person name="Itoh M."/>
            <person name="Kato T."/>
            <person name="Kawaji H."/>
            <person name="Kawagashira N."/>
            <person name="Kawashima T."/>
            <person name="Kojima M."/>
            <person name="Kondo S."/>
            <person name="Konno H."/>
            <person name="Nakano K."/>
            <person name="Ninomiya N."/>
            <person name="Nishio T."/>
            <person name="Okada M."/>
            <person name="Plessy C."/>
            <person name="Shibata K."/>
            <person name="Shiraki T."/>
            <person name="Suzuki S."/>
            <person name="Tagami M."/>
            <person name="Waki K."/>
            <person name="Watahiki A."/>
            <person name="Okamura-Oho Y."/>
            <person name="Suzuki H."/>
            <person name="Kawai J."/>
            <person name="Hayashizaki Y."/>
        </authorList>
    </citation>
    <scope>NUCLEOTIDE SEQUENCE [LARGE SCALE MRNA]</scope>
    <source>
        <strain>C57BL/6J</strain>
    </source>
</reference>
<reference key="2">
    <citation type="journal article" date="2009" name="PLoS Biol.">
        <title>Lineage-specific biology revealed by a finished genome assembly of the mouse.</title>
        <authorList>
            <person name="Church D.M."/>
            <person name="Goodstadt L."/>
            <person name="Hillier L.W."/>
            <person name="Zody M.C."/>
            <person name="Goldstein S."/>
            <person name="She X."/>
            <person name="Bult C.J."/>
            <person name="Agarwala R."/>
            <person name="Cherry J.L."/>
            <person name="DiCuccio M."/>
            <person name="Hlavina W."/>
            <person name="Kapustin Y."/>
            <person name="Meric P."/>
            <person name="Maglott D."/>
            <person name="Birtle Z."/>
            <person name="Marques A.C."/>
            <person name="Graves T."/>
            <person name="Zhou S."/>
            <person name="Teague B."/>
            <person name="Potamousis K."/>
            <person name="Churas C."/>
            <person name="Place M."/>
            <person name="Herschleb J."/>
            <person name="Runnheim R."/>
            <person name="Forrest D."/>
            <person name="Amos-Landgraf J."/>
            <person name="Schwartz D.C."/>
            <person name="Cheng Z."/>
            <person name="Lindblad-Toh K."/>
            <person name="Eichler E.E."/>
            <person name="Ponting C.P."/>
        </authorList>
    </citation>
    <scope>NUCLEOTIDE SEQUENCE [LARGE SCALE GENOMIC DNA]</scope>
    <source>
        <strain>C57BL/6J</strain>
    </source>
</reference>
<reference key="3">
    <citation type="journal article" date="2004" name="Genome Res.">
        <title>The status, quality, and expansion of the NIH full-length cDNA project: the Mammalian Gene Collection (MGC).</title>
        <authorList>
            <consortium name="The MGC Project Team"/>
        </authorList>
    </citation>
    <scope>NUCLEOTIDE SEQUENCE [LARGE SCALE MRNA]</scope>
    <source>
        <tissue>Eye</tissue>
    </source>
</reference>
<reference key="4">
    <citation type="journal article" date="2007" name="Proc. Natl. Acad. Sci. U.S.A.">
        <title>Large-scale phosphorylation analysis of mouse liver.</title>
        <authorList>
            <person name="Villen J."/>
            <person name="Beausoleil S.A."/>
            <person name="Gerber S.A."/>
            <person name="Gygi S.P."/>
        </authorList>
    </citation>
    <scope>PHOSPHORYLATION [LARGE SCALE ANALYSIS] AT THR-140</scope>
    <scope>IDENTIFICATION BY MASS SPECTROMETRY [LARGE SCALE ANALYSIS]</scope>
    <source>
        <tissue>Liver</tissue>
    </source>
</reference>
<reference key="5">
    <citation type="journal article" date="2010" name="Cell">
        <title>A tissue-specific atlas of mouse protein phosphorylation and expression.</title>
        <authorList>
            <person name="Huttlin E.L."/>
            <person name="Jedrychowski M.P."/>
            <person name="Elias J.E."/>
            <person name="Goswami T."/>
            <person name="Rad R."/>
            <person name="Beausoleil S.A."/>
            <person name="Villen J."/>
            <person name="Haas W."/>
            <person name="Sowa M.E."/>
            <person name="Gygi S.P."/>
        </authorList>
    </citation>
    <scope>PHOSPHORYLATION [LARGE SCALE ANALYSIS] AT THR-140 AND SER-149</scope>
    <scope>IDENTIFICATION BY MASS SPECTROMETRY [LARGE SCALE ANALYSIS]</scope>
    <source>
        <tissue>Brain</tissue>
        <tissue>Kidney</tissue>
        <tissue>Lung</tissue>
        <tissue>Spleen</tissue>
        <tissue>Testis</tissue>
    </source>
</reference>
<dbReference type="EMBL" id="AK076115">
    <property type="protein sequence ID" value="BAC36195.1"/>
    <property type="molecule type" value="mRNA"/>
</dbReference>
<dbReference type="EMBL" id="AK168018">
    <property type="protein sequence ID" value="BAE40004.1"/>
    <property type="molecule type" value="mRNA"/>
</dbReference>
<dbReference type="EMBL" id="AL672042">
    <property type="status" value="NOT_ANNOTATED_CDS"/>
    <property type="molecule type" value="Genomic_DNA"/>
</dbReference>
<dbReference type="EMBL" id="BC026976">
    <property type="protein sequence ID" value="AAH26976.1"/>
    <property type="molecule type" value="mRNA"/>
</dbReference>
<dbReference type="CCDS" id="CCDS30114.1"/>
<dbReference type="RefSeq" id="NP_775552.1">
    <property type="nucleotide sequence ID" value="NM_173376.3"/>
</dbReference>
<dbReference type="SMR" id="Q8R0F5"/>
<dbReference type="BioGRID" id="229035">
    <property type="interactions" value="2"/>
</dbReference>
<dbReference type="FunCoup" id="Q8R0F5">
    <property type="interactions" value="1187"/>
</dbReference>
<dbReference type="IntAct" id="Q8R0F5">
    <property type="interactions" value="2"/>
</dbReference>
<dbReference type="STRING" id="10090.ENSMUSP00000033433"/>
<dbReference type="iPTMnet" id="Q8R0F5"/>
<dbReference type="PhosphoSitePlus" id="Q8R0F5"/>
<dbReference type="PaxDb" id="10090-ENSMUSP00000033433"/>
<dbReference type="PeptideAtlas" id="Q8R0F5"/>
<dbReference type="ProteomicsDB" id="300273"/>
<dbReference type="Pumba" id="Q8R0F5"/>
<dbReference type="Antibodypedia" id="6828">
    <property type="antibodies" value="118 antibodies from 22 providers"/>
</dbReference>
<dbReference type="DNASU" id="209003"/>
<dbReference type="Ensembl" id="ENSMUST00000033433.3">
    <property type="protein sequence ID" value="ENSMUSP00000033433.3"/>
    <property type="gene ID" value="ENSMUSG00000031107.7"/>
</dbReference>
<dbReference type="GeneID" id="209003"/>
<dbReference type="KEGG" id="mmu:209003"/>
<dbReference type="UCSC" id="uc009tct.1">
    <property type="organism name" value="mouse"/>
</dbReference>
<dbReference type="AGR" id="MGI:1919414"/>
<dbReference type="CTD" id="51634"/>
<dbReference type="MGI" id="MGI:1919414">
    <property type="gene designation" value="Rbmx2"/>
</dbReference>
<dbReference type="VEuPathDB" id="HostDB:ENSMUSG00000031107"/>
<dbReference type="eggNOG" id="KOG0126">
    <property type="taxonomic scope" value="Eukaryota"/>
</dbReference>
<dbReference type="GeneTree" id="ENSGT00890000139472"/>
<dbReference type="HOGENOM" id="CLU_045495_1_0_1"/>
<dbReference type="InParanoid" id="Q8R0F5"/>
<dbReference type="OMA" id="GSWHVDY"/>
<dbReference type="OrthoDB" id="2573941at2759"/>
<dbReference type="PhylomeDB" id="Q8R0F5"/>
<dbReference type="TreeFam" id="TF313727"/>
<dbReference type="Reactome" id="R-MMU-72163">
    <property type="pathway name" value="mRNA Splicing - Major Pathway"/>
</dbReference>
<dbReference type="BioGRID-ORCS" id="209003">
    <property type="hits" value="22 hits in 78 CRISPR screens"/>
</dbReference>
<dbReference type="ChiTaRS" id="Rbmx2">
    <property type="organism name" value="mouse"/>
</dbReference>
<dbReference type="PRO" id="PR:Q8R0F5"/>
<dbReference type="Proteomes" id="UP000000589">
    <property type="component" value="Chromosome X"/>
</dbReference>
<dbReference type="RNAct" id="Q8R0F5">
    <property type="molecule type" value="protein"/>
</dbReference>
<dbReference type="Bgee" id="ENSMUSG00000031107">
    <property type="expression patterns" value="Expressed in blastoderm cell in morula and 66 other cell types or tissues"/>
</dbReference>
<dbReference type="GO" id="GO:0005783">
    <property type="term" value="C:endoplasmic reticulum"/>
    <property type="evidence" value="ECO:0007669"/>
    <property type="project" value="Ensembl"/>
</dbReference>
<dbReference type="GO" id="GO:0031965">
    <property type="term" value="C:nuclear membrane"/>
    <property type="evidence" value="ECO:0007669"/>
    <property type="project" value="Ensembl"/>
</dbReference>
<dbReference type="GO" id="GO:0005730">
    <property type="term" value="C:nucleolus"/>
    <property type="evidence" value="ECO:0007669"/>
    <property type="project" value="Ensembl"/>
</dbReference>
<dbReference type="GO" id="GO:0005634">
    <property type="term" value="C:nucleus"/>
    <property type="evidence" value="ECO:0000250"/>
    <property type="project" value="UniProtKB"/>
</dbReference>
<dbReference type="GO" id="GO:0071005">
    <property type="term" value="C:U2-type precatalytic spliceosome"/>
    <property type="evidence" value="ECO:0000250"/>
    <property type="project" value="UniProtKB"/>
</dbReference>
<dbReference type="GO" id="GO:0003723">
    <property type="term" value="F:RNA binding"/>
    <property type="evidence" value="ECO:0007669"/>
    <property type="project" value="UniProtKB-KW"/>
</dbReference>
<dbReference type="GO" id="GO:0000398">
    <property type="term" value="P:mRNA splicing, via spliceosome"/>
    <property type="evidence" value="ECO:0000250"/>
    <property type="project" value="UniProtKB"/>
</dbReference>
<dbReference type="CDD" id="cd12411">
    <property type="entry name" value="RRM_ist3_like"/>
    <property type="match status" value="1"/>
</dbReference>
<dbReference type="FunFam" id="3.30.70.330:FF:000218">
    <property type="entry name" value="RNA-binding motif protein, X-linked 2"/>
    <property type="match status" value="1"/>
</dbReference>
<dbReference type="Gene3D" id="3.30.70.330">
    <property type="match status" value="1"/>
</dbReference>
<dbReference type="InterPro" id="IPR012677">
    <property type="entry name" value="Nucleotide-bd_a/b_plait_sf"/>
</dbReference>
<dbReference type="InterPro" id="IPR035979">
    <property type="entry name" value="RBD_domain_sf"/>
</dbReference>
<dbReference type="InterPro" id="IPR051847">
    <property type="entry name" value="RNA_proc/Spliceosome_comp"/>
</dbReference>
<dbReference type="InterPro" id="IPR000504">
    <property type="entry name" value="RRM_dom"/>
</dbReference>
<dbReference type="InterPro" id="IPR045844">
    <property type="entry name" value="RRM_Ist3-like"/>
</dbReference>
<dbReference type="PANTHER" id="PTHR45880">
    <property type="entry name" value="RNA-BINDING MOTIF PROTEIN, X-LINKED 2"/>
    <property type="match status" value="1"/>
</dbReference>
<dbReference type="PANTHER" id="PTHR45880:SF1">
    <property type="entry name" value="RNA-BINDING MOTIF PROTEIN, X-LINKED 2"/>
    <property type="match status" value="1"/>
</dbReference>
<dbReference type="Pfam" id="PF00076">
    <property type="entry name" value="RRM_1"/>
    <property type="match status" value="1"/>
</dbReference>
<dbReference type="SMART" id="SM00360">
    <property type="entry name" value="RRM"/>
    <property type="match status" value="1"/>
</dbReference>
<dbReference type="SUPFAM" id="SSF54928">
    <property type="entry name" value="RNA-binding domain, RBD"/>
    <property type="match status" value="1"/>
</dbReference>
<dbReference type="PROSITE" id="PS50102">
    <property type="entry name" value="RRM"/>
    <property type="match status" value="1"/>
</dbReference>
<organism>
    <name type="scientific">Mus musculus</name>
    <name type="common">Mouse</name>
    <dbReference type="NCBI Taxonomy" id="10090"/>
    <lineage>
        <taxon>Eukaryota</taxon>
        <taxon>Metazoa</taxon>
        <taxon>Chordata</taxon>
        <taxon>Craniata</taxon>
        <taxon>Vertebrata</taxon>
        <taxon>Euteleostomi</taxon>
        <taxon>Mammalia</taxon>
        <taxon>Eutheria</taxon>
        <taxon>Euarchontoglires</taxon>
        <taxon>Glires</taxon>
        <taxon>Rodentia</taxon>
        <taxon>Myomorpha</taxon>
        <taxon>Muroidea</taxon>
        <taxon>Muridae</taxon>
        <taxon>Murinae</taxon>
        <taxon>Mus</taxon>
        <taxon>Mus</taxon>
    </lineage>
</organism>
<accession>Q8R0F5</accession>
<accession>A2AF74</accession>
<accession>Q3TI42</accession>
<name>RBMX2_MOUSE</name>
<comment type="function">
    <text evidence="1">Involved in pre-mRNA splicing as component of the activated spliceosome. As a component of the minor spliceosome, involved in the splicing of U12-type introns in pre-mRNAs (By similarity).</text>
</comment>
<comment type="subunit">
    <text evidence="1">Part of the activated spliceosome B/catalytic step 1 spliceosome, one of the forms of the spliceosome which has a well-formed active site but still cannot catalyze the branching reaction and is composed of at least 52 proteins, the U2, U5 and U6 snRNAs and the pre-mRNA. Component of the minor spliceosome, which splices U12-type introns (By similarity).</text>
</comment>
<comment type="subcellular location">
    <subcellularLocation>
        <location evidence="1">Nucleus</location>
    </subcellularLocation>
</comment>
<comment type="similarity">
    <text evidence="4">Belongs to the IST3 family.</text>
</comment>
<evidence type="ECO:0000250" key="1">
    <source>
        <dbReference type="UniProtKB" id="Q9Y388"/>
    </source>
</evidence>
<evidence type="ECO:0000255" key="2">
    <source>
        <dbReference type="PROSITE-ProRule" id="PRU00176"/>
    </source>
</evidence>
<evidence type="ECO:0000256" key="3">
    <source>
        <dbReference type="SAM" id="MobiDB-lite"/>
    </source>
</evidence>
<evidence type="ECO:0000305" key="4"/>
<evidence type="ECO:0007744" key="5">
    <source>
    </source>
</evidence>
<evidence type="ECO:0007744" key="6">
    <source>
    </source>
</evidence>
<gene>
    <name type="primary">Rbmx2</name>
</gene>
<feature type="chain" id="PRO_0000081898" description="RNA-binding motif protein, X-linked 2">
    <location>
        <begin position="1"/>
        <end position="326"/>
    </location>
</feature>
<feature type="domain" description="RRM" evidence="2">
    <location>
        <begin position="36"/>
        <end position="114"/>
    </location>
</feature>
<feature type="region of interest" description="Disordered" evidence="3">
    <location>
        <begin position="117"/>
        <end position="326"/>
    </location>
</feature>
<feature type="compositionally biased region" description="Basic residues" evidence="3">
    <location>
        <begin position="157"/>
        <end position="172"/>
    </location>
</feature>
<feature type="compositionally biased region" description="Polar residues" evidence="3">
    <location>
        <begin position="177"/>
        <end position="190"/>
    </location>
</feature>
<feature type="compositionally biased region" description="Basic and acidic residues" evidence="3">
    <location>
        <begin position="191"/>
        <end position="200"/>
    </location>
</feature>
<feature type="compositionally biased region" description="Basic and acidic residues" evidence="3">
    <location>
        <begin position="207"/>
        <end position="219"/>
    </location>
</feature>
<feature type="compositionally biased region" description="Basic and acidic residues" evidence="3">
    <location>
        <begin position="236"/>
        <end position="245"/>
    </location>
</feature>
<feature type="compositionally biased region" description="Basic and acidic residues" evidence="3">
    <location>
        <begin position="255"/>
        <end position="273"/>
    </location>
</feature>
<feature type="compositionally biased region" description="Basic residues" evidence="3">
    <location>
        <begin position="291"/>
        <end position="312"/>
    </location>
</feature>
<feature type="compositionally biased region" description="Basic and acidic residues" evidence="3">
    <location>
        <begin position="313"/>
        <end position="326"/>
    </location>
</feature>
<feature type="modified residue" description="Phosphothreonine" evidence="5 6">
    <location>
        <position position="140"/>
    </location>
</feature>
<feature type="modified residue" description="Phosphoserine" evidence="6">
    <location>
        <position position="149"/>
    </location>
</feature>
<feature type="modified residue" description="Phosphoserine" evidence="1">
    <location>
        <position position="274"/>
    </location>
</feature>
<feature type="cross-link" description="Glycyl lysine isopeptide (Lys-Gly) (interchain with G-Cter in SUMO2)" evidence="1">
    <location>
        <position position="8"/>
    </location>
</feature>
<proteinExistence type="evidence at protein level"/>
<keyword id="KW-1017">Isopeptide bond</keyword>
<keyword id="KW-0507">mRNA processing</keyword>
<keyword id="KW-0508">mRNA splicing</keyword>
<keyword id="KW-0539">Nucleus</keyword>
<keyword id="KW-0597">Phosphoprotein</keyword>
<keyword id="KW-1185">Reference proteome</keyword>
<keyword id="KW-0694">RNA-binding</keyword>
<keyword id="KW-0747">Spliceosome</keyword>
<keyword id="KW-0832">Ubl conjugation</keyword>
<protein>
    <recommendedName>
        <fullName>RNA-binding motif protein, X-linked 2</fullName>
    </recommendedName>
</protein>
<sequence>MNPLTKVKLINELNEREVQLGVAEKVSWHSEYKHSAWIFVGGLPYELTEGDIICVFSQYGEIVNINLVRDKKTGKSKGFCFLCYEDQRSTVLAVDNFNGIKIKGRTIRVDHVSNYRAPQESEDVDDVTRELQEKGCGVKTPPSSPPEVSEDEDAKLTKKHKKDKKEKKKRKKEKTEGQAQAEQPSCSRSATVKEKKDERASRKHSSKTSERAQKSEHRESKKSHSGSPDGRSSYHARAEDPECKARKEKPKHEHKSASRREAEEKSRERERGRSSGTHSGRHRGHSDGRSHRSRSRSRSPDKSHRHKKYRHSRERDSYHGSDRRHH</sequence>